<name>Y3419_BACAC</name>
<gene>
    <name type="ordered locus">BAMEG_3419</name>
</gene>
<protein>
    <recommendedName>
        <fullName evidence="1">Nucleotide-binding protein BAMEG_3419</fullName>
    </recommendedName>
</protein>
<sequence>MAKDSSFDIVSKVELPEVTNAINTALKEIQNRYDFKGSKSDIKLEKEVLVLTSDDEFKLEQVKDVLISKLVKRNVPIKNLDYGKVEAAAGNTVRQRATLQQGIDKDNAKKINNIIKEMKLKVKTQVQDDQVRVTAKSRDDLQAVIAAVRSADLPIDVQFINYR</sequence>
<comment type="function">
    <text evidence="1">Nucleotide-binding protein.</text>
</comment>
<comment type="similarity">
    <text evidence="1">Belongs to the YajQ family.</text>
</comment>
<keyword id="KW-0547">Nucleotide-binding</keyword>
<evidence type="ECO:0000255" key="1">
    <source>
        <dbReference type="HAMAP-Rule" id="MF_00632"/>
    </source>
</evidence>
<accession>C3LBW1</accession>
<organism>
    <name type="scientific">Bacillus anthracis (strain CDC 684 / NRRL 3495)</name>
    <dbReference type="NCBI Taxonomy" id="568206"/>
    <lineage>
        <taxon>Bacteria</taxon>
        <taxon>Bacillati</taxon>
        <taxon>Bacillota</taxon>
        <taxon>Bacilli</taxon>
        <taxon>Bacillales</taxon>
        <taxon>Bacillaceae</taxon>
        <taxon>Bacillus</taxon>
        <taxon>Bacillus cereus group</taxon>
    </lineage>
</organism>
<dbReference type="EMBL" id="CP001215">
    <property type="protein sequence ID" value="ACP12969.1"/>
    <property type="molecule type" value="Genomic_DNA"/>
</dbReference>
<dbReference type="RefSeq" id="WP_001040153.1">
    <property type="nucleotide sequence ID" value="NC_012581.1"/>
</dbReference>
<dbReference type="SMR" id="C3LBW1"/>
<dbReference type="KEGG" id="bah:BAMEG_3419"/>
<dbReference type="HOGENOM" id="CLU_099839_1_0_9"/>
<dbReference type="GO" id="GO:0005829">
    <property type="term" value="C:cytosol"/>
    <property type="evidence" value="ECO:0007669"/>
    <property type="project" value="TreeGrafter"/>
</dbReference>
<dbReference type="GO" id="GO:0000166">
    <property type="term" value="F:nucleotide binding"/>
    <property type="evidence" value="ECO:0007669"/>
    <property type="project" value="TreeGrafter"/>
</dbReference>
<dbReference type="CDD" id="cd11740">
    <property type="entry name" value="YajQ_like"/>
    <property type="match status" value="1"/>
</dbReference>
<dbReference type="FunFam" id="3.30.70.990:FF:000002">
    <property type="entry name" value="UPF0234 protein LEP1GSC067_4943"/>
    <property type="match status" value="1"/>
</dbReference>
<dbReference type="FunFam" id="3.30.70.860:FF:000003">
    <property type="entry name" value="UPF0234 protein YBT020_06460"/>
    <property type="match status" value="1"/>
</dbReference>
<dbReference type="Gene3D" id="3.30.70.860">
    <property type="match status" value="1"/>
</dbReference>
<dbReference type="Gene3D" id="3.30.70.990">
    <property type="entry name" value="YajQ-like, domain 2"/>
    <property type="match status" value="1"/>
</dbReference>
<dbReference type="HAMAP" id="MF_00632">
    <property type="entry name" value="YajQ"/>
    <property type="match status" value="1"/>
</dbReference>
<dbReference type="InterPro" id="IPR007551">
    <property type="entry name" value="DUF520"/>
</dbReference>
<dbReference type="InterPro" id="IPR035571">
    <property type="entry name" value="UPF0234-like_C"/>
</dbReference>
<dbReference type="InterPro" id="IPR035570">
    <property type="entry name" value="UPF0234_N"/>
</dbReference>
<dbReference type="InterPro" id="IPR036183">
    <property type="entry name" value="YajQ-like_sf"/>
</dbReference>
<dbReference type="NCBIfam" id="NF003819">
    <property type="entry name" value="PRK05412.1"/>
    <property type="match status" value="1"/>
</dbReference>
<dbReference type="PANTHER" id="PTHR30476">
    <property type="entry name" value="UPF0234 PROTEIN YAJQ"/>
    <property type="match status" value="1"/>
</dbReference>
<dbReference type="PANTHER" id="PTHR30476:SF0">
    <property type="entry name" value="UPF0234 PROTEIN YAJQ"/>
    <property type="match status" value="1"/>
</dbReference>
<dbReference type="Pfam" id="PF04461">
    <property type="entry name" value="DUF520"/>
    <property type="match status" value="1"/>
</dbReference>
<dbReference type="SUPFAM" id="SSF89963">
    <property type="entry name" value="YajQ-like"/>
    <property type="match status" value="2"/>
</dbReference>
<proteinExistence type="inferred from homology"/>
<reference key="1">
    <citation type="submission" date="2008-10" db="EMBL/GenBank/DDBJ databases">
        <title>Genome sequence of Bacillus anthracis str. CDC 684.</title>
        <authorList>
            <person name="Dodson R.J."/>
            <person name="Munk A.C."/>
            <person name="Brettin T."/>
            <person name="Bruce D."/>
            <person name="Detter C."/>
            <person name="Tapia R."/>
            <person name="Han C."/>
            <person name="Sutton G."/>
            <person name="Sims D."/>
        </authorList>
    </citation>
    <scope>NUCLEOTIDE SEQUENCE [LARGE SCALE GENOMIC DNA]</scope>
    <source>
        <strain>CDC 684 / NRRL 3495</strain>
    </source>
</reference>
<feature type="chain" id="PRO_1000147280" description="Nucleotide-binding protein BAMEG_3419">
    <location>
        <begin position="1"/>
        <end position="163"/>
    </location>
</feature>